<keyword id="KW-0119">Carbohydrate metabolism</keyword>
<keyword id="KW-0963">Cytoplasm</keyword>
<keyword id="KW-0378">Hydrolase</keyword>
<keyword id="KW-0460">Magnesium</keyword>
<keyword id="KW-0479">Metal-binding</keyword>
<keyword id="KW-1185">Reference proteome</keyword>
<reference key="1">
    <citation type="submission" date="2008-05" db="EMBL/GenBank/DDBJ databases">
        <title>Complete sequence of chromosome of Geobacter lovleyi SZ.</title>
        <authorList>
            <consortium name="US DOE Joint Genome Institute"/>
            <person name="Lucas S."/>
            <person name="Copeland A."/>
            <person name="Lapidus A."/>
            <person name="Glavina del Rio T."/>
            <person name="Dalin E."/>
            <person name="Tice H."/>
            <person name="Bruce D."/>
            <person name="Goodwin L."/>
            <person name="Pitluck S."/>
            <person name="Chertkov O."/>
            <person name="Meincke L."/>
            <person name="Brettin T."/>
            <person name="Detter J.C."/>
            <person name="Han C."/>
            <person name="Tapia R."/>
            <person name="Kuske C.R."/>
            <person name="Schmutz J."/>
            <person name="Larimer F."/>
            <person name="Land M."/>
            <person name="Hauser L."/>
            <person name="Kyrpides N."/>
            <person name="Mikhailova N."/>
            <person name="Sung Y."/>
            <person name="Fletcher K.E."/>
            <person name="Ritalahti K.M."/>
            <person name="Loeffler F.E."/>
            <person name="Richardson P."/>
        </authorList>
    </citation>
    <scope>NUCLEOTIDE SEQUENCE [LARGE SCALE GENOMIC DNA]</scope>
    <source>
        <strain>ATCC BAA-1151 / DSM 17278 / SZ</strain>
    </source>
</reference>
<feature type="chain" id="PRO_0000364558" description="Fructose-1,6-bisphosphatase class 1">
    <location>
        <begin position="1"/>
        <end position="315"/>
    </location>
</feature>
<feature type="binding site" evidence="1">
    <location>
        <position position="90"/>
    </location>
    <ligand>
        <name>Mg(2+)</name>
        <dbReference type="ChEBI" id="CHEBI:18420"/>
        <label>1</label>
    </ligand>
</feature>
<feature type="binding site" evidence="1">
    <location>
        <position position="111"/>
    </location>
    <ligand>
        <name>Mg(2+)</name>
        <dbReference type="ChEBI" id="CHEBI:18420"/>
        <label>1</label>
    </ligand>
</feature>
<feature type="binding site" evidence="1">
    <location>
        <position position="111"/>
    </location>
    <ligand>
        <name>Mg(2+)</name>
        <dbReference type="ChEBI" id="CHEBI:18420"/>
        <label>2</label>
    </ligand>
</feature>
<feature type="binding site" evidence="1">
    <location>
        <position position="113"/>
    </location>
    <ligand>
        <name>Mg(2+)</name>
        <dbReference type="ChEBI" id="CHEBI:18420"/>
        <label>1</label>
    </ligand>
</feature>
<feature type="binding site" evidence="1">
    <location>
        <begin position="114"/>
        <end position="117"/>
    </location>
    <ligand>
        <name>substrate</name>
    </ligand>
</feature>
<feature type="binding site" evidence="1">
    <location>
        <position position="114"/>
    </location>
    <ligand>
        <name>Mg(2+)</name>
        <dbReference type="ChEBI" id="CHEBI:18420"/>
        <label>2</label>
    </ligand>
</feature>
<feature type="binding site" evidence="1">
    <location>
        <position position="222"/>
    </location>
    <ligand>
        <name>substrate</name>
    </ligand>
</feature>
<feature type="binding site" evidence="1">
    <location>
        <position position="253"/>
    </location>
    <ligand>
        <name>substrate</name>
    </ligand>
</feature>
<feature type="binding site" evidence="1">
    <location>
        <position position="259"/>
    </location>
    <ligand>
        <name>Mg(2+)</name>
        <dbReference type="ChEBI" id="CHEBI:18420"/>
        <label>2</label>
    </ligand>
</feature>
<comment type="catalytic activity">
    <reaction evidence="1">
        <text>beta-D-fructose 1,6-bisphosphate + H2O = beta-D-fructose 6-phosphate + phosphate</text>
        <dbReference type="Rhea" id="RHEA:11064"/>
        <dbReference type="ChEBI" id="CHEBI:15377"/>
        <dbReference type="ChEBI" id="CHEBI:32966"/>
        <dbReference type="ChEBI" id="CHEBI:43474"/>
        <dbReference type="ChEBI" id="CHEBI:57634"/>
        <dbReference type="EC" id="3.1.3.11"/>
    </reaction>
</comment>
<comment type="cofactor">
    <cofactor evidence="1">
        <name>Mg(2+)</name>
        <dbReference type="ChEBI" id="CHEBI:18420"/>
    </cofactor>
    <text evidence="1">Binds 2 magnesium ions per subunit.</text>
</comment>
<comment type="pathway">
    <text evidence="1">Carbohydrate biosynthesis; gluconeogenesis.</text>
</comment>
<comment type="subunit">
    <text evidence="1">Homotetramer.</text>
</comment>
<comment type="subcellular location">
    <subcellularLocation>
        <location evidence="1">Cytoplasm</location>
    </subcellularLocation>
</comment>
<comment type="similarity">
    <text evidence="1">Belongs to the FBPase class 1 family.</text>
</comment>
<proteinExistence type="inferred from homology"/>
<sequence>MGKEPGSTKFQTDFRRHLREQNISGNLVHLLCEIAEASKYVINAVRTGDLGVAGTSNLYGEEQLALDVLSDRILRKRLMYSGVVCNIASEEMDEIFQVTSNPLGMFSVAYDPLDGSSLVDVNLAVGTIVGIYQGDNLLQPGRNMVGAMYILYGPRVSMVYSVGKGVYEFTMNHLMEFTLTREKVQMNPSGDIYSPGGLRKKYTPENEAYIRYLEDKGSKLRYSGGFVPDINQILMKGKGIFMYPALTDSPNGKLRLLFELNPMAYLIEQAGGAATNGCMPILDMQPEGLDQRAPIYIGCKEDVAKATEFLNGACA</sequence>
<gene>
    <name evidence="1" type="primary">fbp</name>
    <name type="ordered locus">Glov_1964</name>
</gene>
<name>F16PA_TRIL1</name>
<protein>
    <recommendedName>
        <fullName evidence="1">Fructose-1,6-bisphosphatase class 1</fullName>
        <shortName evidence="1">FBPase class 1</shortName>
        <ecNumber evidence="1">3.1.3.11</ecNumber>
    </recommendedName>
    <alternativeName>
        <fullName evidence="1">D-fructose-1,6-bisphosphate 1-phosphohydrolase class 1</fullName>
    </alternativeName>
</protein>
<accession>B3E2M3</accession>
<dbReference type="EC" id="3.1.3.11" evidence="1"/>
<dbReference type="EMBL" id="CP001089">
    <property type="protein sequence ID" value="ACD95680.1"/>
    <property type="molecule type" value="Genomic_DNA"/>
</dbReference>
<dbReference type="RefSeq" id="WP_012470019.1">
    <property type="nucleotide sequence ID" value="NC_010814.1"/>
</dbReference>
<dbReference type="SMR" id="B3E2M3"/>
<dbReference type="STRING" id="398767.Glov_1964"/>
<dbReference type="KEGG" id="glo:Glov_1964"/>
<dbReference type="eggNOG" id="COG0158">
    <property type="taxonomic scope" value="Bacteria"/>
</dbReference>
<dbReference type="HOGENOM" id="CLU_039977_2_2_7"/>
<dbReference type="OrthoDB" id="9806756at2"/>
<dbReference type="UniPathway" id="UPA00138"/>
<dbReference type="Proteomes" id="UP000002420">
    <property type="component" value="Chromosome"/>
</dbReference>
<dbReference type="GO" id="GO:0005829">
    <property type="term" value="C:cytosol"/>
    <property type="evidence" value="ECO:0007669"/>
    <property type="project" value="TreeGrafter"/>
</dbReference>
<dbReference type="GO" id="GO:0042132">
    <property type="term" value="F:fructose 1,6-bisphosphate 1-phosphatase activity"/>
    <property type="evidence" value="ECO:0007669"/>
    <property type="project" value="UniProtKB-UniRule"/>
</dbReference>
<dbReference type="GO" id="GO:0000287">
    <property type="term" value="F:magnesium ion binding"/>
    <property type="evidence" value="ECO:0007669"/>
    <property type="project" value="UniProtKB-UniRule"/>
</dbReference>
<dbReference type="GO" id="GO:0030388">
    <property type="term" value="P:fructose 1,6-bisphosphate metabolic process"/>
    <property type="evidence" value="ECO:0007669"/>
    <property type="project" value="TreeGrafter"/>
</dbReference>
<dbReference type="GO" id="GO:0006002">
    <property type="term" value="P:fructose 6-phosphate metabolic process"/>
    <property type="evidence" value="ECO:0007669"/>
    <property type="project" value="TreeGrafter"/>
</dbReference>
<dbReference type="GO" id="GO:0006000">
    <property type="term" value="P:fructose metabolic process"/>
    <property type="evidence" value="ECO:0007669"/>
    <property type="project" value="TreeGrafter"/>
</dbReference>
<dbReference type="GO" id="GO:0006094">
    <property type="term" value="P:gluconeogenesis"/>
    <property type="evidence" value="ECO:0007669"/>
    <property type="project" value="UniProtKB-UniRule"/>
</dbReference>
<dbReference type="GO" id="GO:0005986">
    <property type="term" value="P:sucrose biosynthetic process"/>
    <property type="evidence" value="ECO:0007669"/>
    <property type="project" value="TreeGrafter"/>
</dbReference>
<dbReference type="CDD" id="cd00354">
    <property type="entry name" value="FBPase"/>
    <property type="match status" value="1"/>
</dbReference>
<dbReference type="Gene3D" id="3.40.190.80">
    <property type="match status" value="1"/>
</dbReference>
<dbReference type="Gene3D" id="3.30.540.10">
    <property type="entry name" value="Fructose-1,6-Bisphosphatase, subunit A, domain 1"/>
    <property type="match status" value="1"/>
</dbReference>
<dbReference type="HAMAP" id="MF_01855">
    <property type="entry name" value="FBPase_class1"/>
    <property type="match status" value="1"/>
</dbReference>
<dbReference type="InterPro" id="IPR044015">
    <property type="entry name" value="FBPase_C_dom"/>
</dbReference>
<dbReference type="InterPro" id="IPR000146">
    <property type="entry name" value="FBPase_class-1"/>
</dbReference>
<dbReference type="InterPro" id="IPR033391">
    <property type="entry name" value="FBPase_N"/>
</dbReference>
<dbReference type="InterPro" id="IPR028343">
    <property type="entry name" value="FBPtase"/>
</dbReference>
<dbReference type="InterPro" id="IPR020548">
    <property type="entry name" value="Fructose_bisphosphatase_AS"/>
</dbReference>
<dbReference type="InterPro" id="IPR023079">
    <property type="entry name" value="SBPase"/>
</dbReference>
<dbReference type="NCBIfam" id="NF006783">
    <property type="entry name" value="PRK09293.2-4"/>
    <property type="match status" value="1"/>
</dbReference>
<dbReference type="PANTHER" id="PTHR11556">
    <property type="entry name" value="FRUCTOSE-1,6-BISPHOSPHATASE-RELATED"/>
    <property type="match status" value="1"/>
</dbReference>
<dbReference type="PANTHER" id="PTHR11556:SF35">
    <property type="entry name" value="SEDOHEPTULOSE-1,7-BISPHOSPHATASE, CHLOROPLASTIC"/>
    <property type="match status" value="1"/>
</dbReference>
<dbReference type="Pfam" id="PF00316">
    <property type="entry name" value="FBPase"/>
    <property type="match status" value="1"/>
</dbReference>
<dbReference type="Pfam" id="PF18913">
    <property type="entry name" value="FBPase_C"/>
    <property type="match status" value="1"/>
</dbReference>
<dbReference type="PIRSF" id="PIRSF500210">
    <property type="entry name" value="FBPtase"/>
    <property type="match status" value="1"/>
</dbReference>
<dbReference type="PIRSF" id="PIRSF000904">
    <property type="entry name" value="FBPtase_SBPase"/>
    <property type="match status" value="1"/>
</dbReference>
<dbReference type="PRINTS" id="PR01958">
    <property type="entry name" value="S17BPHPHTASE"/>
</dbReference>
<dbReference type="SUPFAM" id="SSF56655">
    <property type="entry name" value="Carbohydrate phosphatase"/>
    <property type="match status" value="1"/>
</dbReference>
<dbReference type="PROSITE" id="PS00124">
    <property type="entry name" value="FBPASE"/>
    <property type="match status" value="1"/>
</dbReference>
<organism>
    <name type="scientific">Trichlorobacter lovleyi (strain ATCC BAA-1151 / DSM 17278 / SZ)</name>
    <name type="common">Geobacter lovleyi</name>
    <dbReference type="NCBI Taxonomy" id="398767"/>
    <lineage>
        <taxon>Bacteria</taxon>
        <taxon>Pseudomonadati</taxon>
        <taxon>Thermodesulfobacteriota</taxon>
        <taxon>Desulfuromonadia</taxon>
        <taxon>Geobacterales</taxon>
        <taxon>Geobacteraceae</taxon>
        <taxon>Trichlorobacter</taxon>
    </lineage>
</organism>
<evidence type="ECO:0000255" key="1">
    <source>
        <dbReference type="HAMAP-Rule" id="MF_01855"/>
    </source>
</evidence>